<comment type="function">
    <text evidence="1">With S4 and S12 plays an important role in translational accuracy.</text>
</comment>
<comment type="function">
    <text evidence="1">Located at the back of the 30S subunit body where it stabilizes the conformation of the head with respect to the body.</text>
</comment>
<comment type="subunit">
    <text evidence="1">Part of the 30S ribosomal subunit. Contacts proteins S4 and S8.</text>
</comment>
<comment type="domain">
    <text>The N-terminal domain interacts with the head of the 30S subunit; the C-terminal domain interacts with the body and contacts protein S4. The interaction surface between S4 and S5 is involved in control of translational fidelity.</text>
</comment>
<comment type="similarity">
    <text evidence="1">Belongs to the universal ribosomal protein uS5 family.</text>
</comment>
<gene>
    <name evidence="1" type="primary">rpsE</name>
    <name type="ordered locus">BVU_0788</name>
</gene>
<dbReference type="EMBL" id="CP000139">
    <property type="protein sequence ID" value="ABR38492.1"/>
    <property type="molecule type" value="Genomic_DNA"/>
</dbReference>
<dbReference type="RefSeq" id="WP_005844884.1">
    <property type="nucleotide sequence ID" value="NZ_JANSWM010000035.1"/>
</dbReference>
<dbReference type="SMR" id="A6KYH8"/>
<dbReference type="STRING" id="435590.BVU_0788"/>
<dbReference type="PaxDb" id="435590-BVU_0788"/>
<dbReference type="GeneID" id="5301755"/>
<dbReference type="KEGG" id="bvu:BVU_0788"/>
<dbReference type="eggNOG" id="COG0098">
    <property type="taxonomic scope" value="Bacteria"/>
</dbReference>
<dbReference type="HOGENOM" id="CLU_065898_2_2_10"/>
<dbReference type="Proteomes" id="UP000002861">
    <property type="component" value="Chromosome"/>
</dbReference>
<dbReference type="GO" id="GO:0015935">
    <property type="term" value="C:small ribosomal subunit"/>
    <property type="evidence" value="ECO:0007669"/>
    <property type="project" value="InterPro"/>
</dbReference>
<dbReference type="GO" id="GO:0019843">
    <property type="term" value="F:rRNA binding"/>
    <property type="evidence" value="ECO:0007669"/>
    <property type="project" value="UniProtKB-UniRule"/>
</dbReference>
<dbReference type="GO" id="GO:0003735">
    <property type="term" value="F:structural constituent of ribosome"/>
    <property type="evidence" value="ECO:0007669"/>
    <property type="project" value="InterPro"/>
</dbReference>
<dbReference type="GO" id="GO:0006412">
    <property type="term" value="P:translation"/>
    <property type="evidence" value="ECO:0007669"/>
    <property type="project" value="UniProtKB-UniRule"/>
</dbReference>
<dbReference type="FunFam" id="3.30.160.20:FF:000001">
    <property type="entry name" value="30S ribosomal protein S5"/>
    <property type="match status" value="1"/>
</dbReference>
<dbReference type="FunFam" id="3.30.230.10:FF:000002">
    <property type="entry name" value="30S ribosomal protein S5"/>
    <property type="match status" value="1"/>
</dbReference>
<dbReference type="Gene3D" id="3.30.160.20">
    <property type="match status" value="1"/>
</dbReference>
<dbReference type="Gene3D" id="3.30.230.10">
    <property type="match status" value="1"/>
</dbReference>
<dbReference type="HAMAP" id="MF_01307_B">
    <property type="entry name" value="Ribosomal_uS5_B"/>
    <property type="match status" value="1"/>
</dbReference>
<dbReference type="InterPro" id="IPR020568">
    <property type="entry name" value="Ribosomal_Su5_D2-typ_SF"/>
</dbReference>
<dbReference type="InterPro" id="IPR000851">
    <property type="entry name" value="Ribosomal_uS5"/>
</dbReference>
<dbReference type="InterPro" id="IPR005712">
    <property type="entry name" value="Ribosomal_uS5_bac-type"/>
</dbReference>
<dbReference type="InterPro" id="IPR005324">
    <property type="entry name" value="Ribosomal_uS5_C"/>
</dbReference>
<dbReference type="InterPro" id="IPR013810">
    <property type="entry name" value="Ribosomal_uS5_N"/>
</dbReference>
<dbReference type="InterPro" id="IPR018192">
    <property type="entry name" value="Ribosomal_uS5_N_CS"/>
</dbReference>
<dbReference type="InterPro" id="IPR014721">
    <property type="entry name" value="Ribsml_uS5_D2-typ_fold_subgr"/>
</dbReference>
<dbReference type="NCBIfam" id="TIGR01021">
    <property type="entry name" value="rpsE_bact"/>
    <property type="match status" value="1"/>
</dbReference>
<dbReference type="PANTHER" id="PTHR48277">
    <property type="entry name" value="MITOCHONDRIAL RIBOSOMAL PROTEIN S5"/>
    <property type="match status" value="1"/>
</dbReference>
<dbReference type="PANTHER" id="PTHR48277:SF1">
    <property type="entry name" value="MITOCHONDRIAL RIBOSOMAL PROTEIN S5"/>
    <property type="match status" value="1"/>
</dbReference>
<dbReference type="Pfam" id="PF00333">
    <property type="entry name" value="Ribosomal_S5"/>
    <property type="match status" value="1"/>
</dbReference>
<dbReference type="Pfam" id="PF03719">
    <property type="entry name" value="Ribosomal_S5_C"/>
    <property type="match status" value="1"/>
</dbReference>
<dbReference type="SUPFAM" id="SSF54768">
    <property type="entry name" value="dsRNA-binding domain-like"/>
    <property type="match status" value="1"/>
</dbReference>
<dbReference type="SUPFAM" id="SSF54211">
    <property type="entry name" value="Ribosomal protein S5 domain 2-like"/>
    <property type="match status" value="1"/>
</dbReference>
<dbReference type="PROSITE" id="PS00585">
    <property type="entry name" value="RIBOSOMAL_S5"/>
    <property type="match status" value="1"/>
</dbReference>
<dbReference type="PROSITE" id="PS50881">
    <property type="entry name" value="S5_DSRBD"/>
    <property type="match status" value="1"/>
</dbReference>
<reference key="1">
    <citation type="journal article" date="2007" name="PLoS Biol.">
        <title>Evolution of symbiotic bacteria in the distal human intestine.</title>
        <authorList>
            <person name="Xu J."/>
            <person name="Mahowald M.A."/>
            <person name="Ley R.E."/>
            <person name="Lozupone C.A."/>
            <person name="Hamady M."/>
            <person name="Martens E.C."/>
            <person name="Henrissat B."/>
            <person name="Coutinho P.M."/>
            <person name="Minx P."/>
            <person name="Latreille P."/>
            <person name="Cordum H."/>
            <person name="Van Brunt A."/>
            <person name="Kim K."/>
            <person name="Fulton R.S."/>
            <person name="Fulton L.A."/>
            <person name="Clifton S.W."/>
            <person name="Wilson R.K."/>
            <person name="Knight R.D."/>
            <person name="Gordon J.I."/>
        </authorList>
    </citation>
    <scope>NUCLEOTIDE SEQUENCE [LARGE SCALE GENOMIC DNA]</scope>
    <source>
        <strain>ATCC 8482 / DSM 1447 / JCM 5826 / CCUG 4940 / NBRC 14291 / NCTC 11154</strain>
    </source>
</reference>
<evidence type="ECO:0000255" key="1">
    <source>
        <dbReference type="HAMAP-Rule" id="MF_01307"/>
    </source>
</evidence>
<evidence type="ECO:0000305" key="2"/>
<protein>
    <recommendedName>
        <fullName evidence="1">Small ribosomal subunit protein uS5</fullName>
    </recommendedName>
    <alternativeName>
        <fullName evidence="2">30S ribosomal protein S5</fullName>
    </alternativeName>
</protein>
<organism>
    <name type="scientific">Phocaeicola vulgatus (strain ATCC 8482 / DSM 1447 / JCM 5826 / CCUG 4940 / NBRC 14291 / NCTC 11154)</name>
    <name type="common">Bacteroides vulgatus</name>
    <dbReference type="NCBI Taxonomy" id="435590"/>
    <lineage>
        <taxon>Bacteria</taxon>
        <taxon>Pseudomonadati</taxon>
        <taxon>Bacteroidota</taxon>
        <taxon>Bacteroidia</taxon>
        <taxon>Bacteroidales</taxon>
        <taxon>Bacteroidaceae</taxon>
        <taxon>Phocaeicola</taxon>
    </lineage>
</organism>
<accession>A6KYH8</accession>
<keyword id="KW-0687">Ribonucleoprotein</keyword>
<keyword id="KW-0689">Ribosomal protein</keyword>
<keyword id="KW-0694">RNA-binding</keyword>
<keyword id="KW-0699">rRNA-binding</keyword>
<proteinExistence type="inferred from homology"/>
<sequence>MAVNNRVKITNDIELKDRLVAINRVTKVTKGGRTFSFSAIVVVGNEDGIIGWGLGKAGEVTAAIAKGVEAAKKNLTRVPVLKGTVPHEQSAKFGGAEVFIKPASTGTGVVAGGAMRAVLESVGVTDVLAKSKGSSNPHNLVKATILALGEMRDARMVAQNRGVSMEKVFRG</sequence>
<name>RS5_PHOV8</name>
<feature type="chain" id="PRO_0000323074" description="Small ribosomal subunit protein uS5">
    <location>
        <begin position="1"/>
        <end position="171"/>
    </location>
</feature>
<feature type="domain" description="S5 DRBM" evidence="1">
    <location>
        <begin position="15"/>
        <end position="78"/>
    </location>
</feature>